<sequence>MDQYCILGRIGEGAHGIVFKAKHVETGEIVALKKVALRRLEDGIPNQALREIKALQEMEDNQYVVQLKAVFPHSAGFVLAFEFMLSDLAEVVRHAQRPLAQAQVKSYLQMLLKGVSFCHANNIVHRDLKPANLLISASGQLKIADFGLARVFSPDGSRLYTHQVATRWYRAPELLYGARQYDQGVDLWAVGCIMGELLNGSPLFPGKNDIEQLCYVLRILGTPNPQVWPELTELPDYNKISFKEQAPVPLEEVLPDASPQALDLLGQFLLYPPRQRIAASKALLHQYFFTAPLPAHPSELPIPQRLGVPAPKAHPGPPRIHDFYVDRPLEESLLNPELIRPFILEG</sequence>
<accession>Q5R7I7</accession>
<organism>
    <name type="scientific">Pongo abelii</name>
    <name type="common">Sumatran orangutan</name>
    <name type="synonym">Pongo pygmaeus abelii</name>
    <dbReference type="NCBI Taxonomy" id="9601"/>
    <lineage>
        <taxon>Eukaryota</taxon>
        <taxon>Metazoa</taxon>
        <taxon>Chordata</taxon>
        <taxon>Craniata</taxon>
        <taxon>Vertebrata</taxon>
        <taxon>Euteleostomi</taxon>
        <taxon>Mammalia</taxon>
        <taxon>Eutheria</taxon>
        <taxon>Euarchontoglires</taxon>
        <taxon>Primates</taxon>
        <taxon>Haplorrhini</taxon>
        <taxon>Catarrhini</taxon>
        <taxon>Hominidae</taxon>
        <taxon>Pongo</taxon>
    </lineage>
</organism>
<gene>
    <name type="primary">CDK20</name>
    <name type="synonym">CCRK</name>
</gene>
<protein>
    <recommendedName>
        <fullName>Cyclin-dependent kinase 20</fullName>
        <ecNumber>2.7.11.22</ecNumber>
    </recommendedName>
    <alternativeName>
        <fullName>Cell cycle-related kinase</fullName>
    </alternativeName>
    <alternativeName>
        <fullName>Cell division protein kinase 20</fullName>
    </alternativeName>
</protein>
<name>CDK20_PONAB</name>
<evidence type="ECO:0000250" key="1"/>
<evidence type="ECO:0000255" key="2">
    <source>
        <dbReference type="PROSITE-ProRule" id="PRU00159"/>
    </source>
</evidence>
<evidence type="ECO:0000255" key="3">
    <source>
        <dbReference type="PROSITE-ProRule" id="PRU10027"/>
    </source>
</evidence>
<evidence type="ECO:0000305" key="4"/>
<keyword id="KW-0067">ATP-binding</keyword>
<keyword id="KW-0131">Cell cycle</keyword>
<keyword id="KW-0132">Cell division</keyword>
<keyword id="KW-0966">Cell projection</keyword>
<keyword id="KW-0969">Cilium</keyword>
<keyword id="KW-0963">Cytoplasm</keyword>
<keyword id="KW-0217">Developmental protein</keyword>
<keyword id="KW-0418">Kinase</keyword>
<keyword id="KW-0547">Nucleotide-binding</keyword>
<keyword id="KW-0539">Nucleus</keyword>
<keyword id="KW-1185">Reference proteome</keyword>
<keyword id="KW-0723">Serine/threonine-protein kinase</keyword>
<keyword id="KW-0808">Transferase</keyword>
<comment type="function">
    <text evidence="1">Required for high-level Shh responses in the developing neural tube. Together with TBC1D32, controls the structure of the primary cilium by coordinating assembly of the ciliary membrane and axoneme, allowing GLI2 to be properly activated in response to SHH signaling. Involved in cell growth. Activates CDK2, a kinase involved in the control of the cell cycle, by phosphorylating residue 'Thr-160' (By similarity).</text>
</comment>
<comment type="catalytic activity">
    <reaction>
        <text>L-seryl-[protein] + ATP = O-phospho-L-seryl-[protein] + ADP + H(+)</text>
        <dbReference type="Rhea" id="RHEA:17989"/>
        <dbReference type="Rhea" id="RHEA-COMP:9863"/>
        <dbReference type="Rhea" id="RHEA-COMP:11604"/>
        <dbReference type="ChEBI" id="CHEBI:15378"/>
        <dbReference type="ChEBI" id="CHEBI:29999"/>
        <dbReference type="ChEBI" id="CHEBI:30616"/>
        <dbReference type="ChEBI" id="CHEBI:83421"/>
        <dbReference type="ChEBI" id="CHEBI:456216"/>
        <dbReference type="EC" id="2.7.11.22"/>
    </reaction>
</comment>
<comment type="catalytic activity">
    <reaction>
        <text>L-threonyl-[protein] + ATP = O-phospho-L-threonyl-[protein] + ADP + H(+)</text>
        <dbReference type="Rhea" id="RHEA:46608"/>
        <dbReference type="Rhea" id="RHEA-COMP:11060"/>
        <dbReference type="Rhea" id="RHEA-COMP:11605"/>
        <dbReference type="ChEBI" id="CHEBI:15378"/>
        <dbReference type="ChEBI" id="CHEBI:30013"/>
        <dbReference type="ChEBI" id="CHEBI:30616"/>
        <dbReference type="ChEBI" id="CHEBI:61977"/>
        <dbReference type="ChEBI" id="CHEBI:456216"/>
        <dbReference type="EC" id="2.7.11.22"/>
    </reaction>
</comment>
<comment type="subunit">
    <text evidence="1">Monomer. Interacts with TBC1D32 and MAK.</text>
</comment>
<comment type="subcellular location">
    <subcellularLocation>
        <location evidence="1">Nucleus</location>
    </subcellularLocation>
    <subcellularLocation>
        <location evidence="1">Cytoplasm</location>
    </subcellularLocation>
    <subcellularLocation>
        <location evidence="1">Cell projection</location>
        <location evidence="1">Cilium</location>
    </subcellularLocation>
</comment>
<comment type="similarity">
    <text evidence="4">Belongs to the protein kinase superfamily. CMGC Ser/Thr protein kinase family. CDC2/CDKX subfamily.</text>
</comment>
<proteinExistence type="evidence at transcript level"/>
<feature type="chain" id="PRO_0000085704" description="Cyclin-dependent kinase 20">
    <location>
        <begin position="1"/>
        <end position="346"/>
    </location>
</feature>
<feature type="domain" description="Protein kinase" evidence="2">
    <location>
        <begin position="4"/>
        <end position="288"/>
    </location>
</feature>
<feature type="active site" description="Proton acceptor" evidence="2 3">
    <location>
        <position position="127"/>
    </location>
</feature>
<feature type="binding site" evidence="2">
    <location>
        <begin position="10"/>
        <end position="18"/>
    </location>
    <ligand>
        <name>ATP</name>
        <dbReference type="ChEBI" id="CHEBI:30616"/>
    </ligand>
</feature>
<feature type="binding site" evidence="2">
    <location>
        <position position="33"/>
    </location>
    <ligand>
        <name>ATP</name>
        <dbReference type="ChEBI" id="CHEBI:30616"/>
    </ligand>
</feature>
<reference key="1">
    <citation type="submission" date="2004-11" db="EMBL/GenBank/DDBJ databases">
        <authorList>
            <consortium name="The German cDNA consortium"/>
        </authorList>
    </citation>
    <scope>NUCLEOTIDE SEQUENCE [LARGE SCALE MRNA]</scope>
    <source>
        <tissue>Kidney</tissue>
    </source>
</reference>
<dbReference type="EC" id="2.7.11.22"/>
<dbReference type="EMBL" id="CR860129">
    <property type="protein sequence ID" value="CAH92273.1"/>
    <property type="molecule type" value="mRNA"/>
</dbReference>
<dbReference type="RefSeq" id="NP_001126328.1">
    <property type="nucleotide sequence ID" value="NM_001132856.1"/>
</dbReference>
<dbReference type="SMR" id="Q5R7I7"/>
<dbReference type="FunCoup" id="Q5R7I7">
    <property type="interactions" value="1831"/>
</dbReference>
<dbReference type="STRING" id="9601.ENSPPYP00000021685"/>
<dbReference type="Ensembl" id="ENSPPYT00000022572.3">
    <property type="protein sequence ID" value="ENSPPYP00000021685.2"/>
    <property type="gene ID" value="ENSPPYG00000019353.3"/>
</dbReference>
<dbReference type="GeneID" id="100173309"/>
<dbReference type="KEGG" id="pon:100173309"/>
<dbReference type="CTD" id="23552"/>
<dbReference type="eggNOG" id="KOG0659">
    <property type="taxonomic scope" value="Eukaryota"/>
</dbReference>
<dbReference type="GeneTree" id="ENSGT00940000159128"/>
<dbReference type="HOGENOM" id="CLU_000288_181_1_1"/>
<dbReference type="InParanoid" id="Q5R7I7"/>
<dbReference type="OMA" id="KITFPYH"/>
<dbReference type="OrthoDB" id="63265at2759"/>
<dbReference type="TreeFam" id="TF327240"/>
<dbReference type="Proteomes" id="UP000001595">
    <property type="component" value="Chromosome 9"/>
</dbReference>
<dbReference type="GO" id="GO:0005929">
    <property type="term" value="C:cilium"/>
    <property type="evidence" value="ECO:0007669"/>
    <property type="project" value="UniProtKB-SubCell"/>
</dbReference>
<dbReference type="GO" id="GO:0005794">
    <property type="term" value="C:Golgi apparatus"/>
    <property type="evidence" value="ECO:0007669"/>
    <property type="project" value="Ensembl"/>
</dbReference>
<dbReference type="GO" id="GO:0005654">
    <property type="term" value="C:nucleoplasm"/>
    <property type="evidence" value="ECO:0007669"/>
    <property type="project" value="Ensembl"/>
</dbReference>
<dbReference type="GO" id="GO:0005524">
    <property type="term" value="F:ATP binding"/>
    <property type="evidence" value="ECO:0007669"/>
    <property type="project" value="UniProtKB-KW"/>
</dbReference>
<dbReference type="GO" id="GO:0004693">
    <property type="term" value="F:cyclin-dependent protein serine/threonine kinase activity"/>
    <property type="evidence" value="ECO:0007669"/>
    <property type="project" value="UniProtKB-EC"/>
</dbReference>
<dbReference type="GO" id="GO:0106310">
    <property type="term" value="F:protein serine kinase activity"/>
    <property type="evidence" value="ECO:0007669"/>
    <property type="project" value="RHEA"/>
</dbReference>
<dbReference type="GO" id="GO:0051301">
    <property type="term" value="P:cell division"/>
    <property type="evidence" value="ECO:0007669"/>
    <property type="project" value="UniProtKB-KW"/>
</dbReference>
<dbReference type="CDD" id="cd07832">
    <property type="entry name" value="STKc_CCRK"/>
    <property type="match status" value="1"/>
</dbReference>
<dbReference type="FunFam" id="1.10.510.10:FF:000406">
    <property type="entry name" value="cyclin-dependent kinase 20 isoform X1"/>
    <property type="match status" value="1"/>
</dbReference>
<dbReference type="FunFam" id="3.30.200.20:FF:000211">
    <property type="entry name" value="Putative cyclin-dependent kinase 20"/>
    <property type="match status" value="1"/>
</dbReference>
<dbReference type="Gene3D" id="3.30.200.20">
    <property type="entry name" value="Phosphorylase Kinase, domain 1"/>
    <property type="match status" value="1"/>
</dbReference>
<dbReference type="Gene3D" id="1.10.510.10">
    <property type="entry name" value="Transferase(Phosphotransferase) domain 1"/>
    <property type="match status" value="1"/>
</dbReference>
<dbReference type="InterPro" id="IPR050108">
    <property type="entry name" value="CDK"/>
</dbReference>
<dbReference type="InterPro" id="IPR048002">
    <property type="entry name" value="CDK20-like_STKc"/>
</dbReference>
<dbReference type="InterPro" id="IPR011009">
    <property type="entry name" value="Kinase-like_dom_sf"/>
</dbReference>
<dbReference type="InterPro" id="IPR000719">
    <property type="entry name" value="Prot_kinase_dom"/>
</dbReference>
<dbReference type="InterPro" id="IPR017441">
    <property type="entry name" value="Protein_kinase_ATP_BS"/>
</dbReference>
<dbReference type="InterPro" id="IPR008271">
    <property type="entry name" value="Ser/Thr_kinase_AS"/>
</dbReference>
<dbReference type="PANTHER" id="PTHR24056">
    <property type="entry name" value="CELL DIVISION PROTEIN KINASE"/>
    <property type="match status" value="1"/>
</dbReference>
<dbReference type="PANTHER" id="PTHR24056:SF171">
    <property type="entry name" value="CYCLIN-DEPENDENT KINASE 20"/>
    <property type="match status" value="1"/>
</dbReference>
<dbReference type="Pfam" id="PF00069">
    <property type="entry name" value="Pkinase"/>
    <property type="match status" value="1"/>
</dbReference>
<dbReference type="SMART" id="SM00220">
    <property type="entry name" value="S_TKc"/>
    <property type="match status" value="1"/>
</dbReference>
<dbReference type="SUPFAM" id="SSF56112">
    <property type="entry name" value="Protein kinase-like (PK-like)"/>
    <property type="match status" value="1"/>
</dbReference>
<dbReference type="PROSITE" id="PS00107">
    <property type="entry name" value="PROTEIN_KINASE_ATP"/>
    <property type="match status" value="1"/>
</dbReference>
<dbReference type="PROSITE" id="PS50011">
    <property type="entry name" value="PROTEIN_KINASE_DOM"/>
    <property type="match status" value="1"/>
</dbReference>
<dbReference type="PROSITE" id="PS00108">
    <property type="entry name" value="PROTEIN_KINASE_ST"/>
    <property type="match status" value="1"/>
</dbReference>